<keyword id="KW-0175">Coiled coil</keyword>
<keyword id="KW-0963">Cytoplasm</keyword>
<keyword id="KW-0206">Cytoskeleton</keyword>
<keyword id="KW-0479">Metal-binding</keyword>
<keyword id="KW-0539">Nucleus</keyword>
<keyword id="KW-1185">Reference proteome</keyword>
<keyword id="KW-0862">Zinc</keyword>
<keyword id="KW-0863">Zinc-finger</keyword>
<proteinExistence type="inferred from homology"/>
<evidence type="ECO:0000250" key="1"/>
<evidence type="ECO:0000255" key="2"/>
<evidence type="ECO:0000269" key="3">
    <source>
    </source>
</evidence>
<evidence type="ECO:0000305" key="4"/>
<dbReference type="EMBL" id="CU329670">
    <property type="protein sequence ID" value="CAA91076.3"/>
    <property type="status" value="ALT_FRAME"/>
    <property type="molecule type" value="Genomic_DNA"/>
</dbReference>
<dbReference type="PIR" id="T38180">
    <property type="entry name" value="S62426"/>
</dbReference>
<dbReference type="FunCoup" id="Q09776">
    <property type="interactions" value="416"/>
</dbReference>
<dbReference type="IntAct" id="Q09776">
    <property type="interactions" value="2"/>
</dbReference>
<dbReference type="STRING" id="284812.Q09776"/>
<dbReference type="PomBase" id="SPAC22F3.11c">
    <property type="gene designation" value="snu23"/>
</dbReference>
<dbReference type="InParanoid" id="Q09776"/>
<dbReference type="PhylomeDB" id="Q09776"/>
<dbReference type="PRO" id="PR:Q09776"/>
<dbReference type="Proteomes" id="UP000002485">
    <property type="component" value="Chromosome I"/>
</dbReference>
<dbReference type="GO" id="GO:0005829">
    <property type="term" value="C:cytosol"/>
    <property type="evidence" value="ECO:0007005"/>
    <property type="project" value="PomBase"/>
</dbReference>
<dbReference type="GO" id="GO:0005634">
    <property type="term" value="C:nucleus"/>
    <property type="evidence" value="ECO:0007005"/>
    <property type="project" value="PomBase"/>
</dbReference>
<dbReference type="GO" id="GO:0005816">
    <property type="term" value="C:spindle pole body"/>
    <property type="evidence" value="ECO:0007669"/>
    <property type="project" value="UniProtKB-SubCell"/>
</dbReference>
<dbReference type="GO" id="GO:0005681">
    <property type="term" value="C:spliceosomal complex"/>
    <property type="evidence" value="ECO:0007669"/>
    <property type="project" value="InterPro"/>
</dbReference>
<dbReference type="GO" id="GO:0046540">
    <property type="term" value="C:U4/U6 x U5 tri-snRNP complex"/>
    <property type="evidence" value="ECO:0000314"/>
    <property type="project" value="PomBase"/>
</dbReference>
<dbReference type="GO" id="GO:0003676">
    <property type="term" value="F:nucleic acid binding"/>
    <property type="evidence" value="ECO:0007669"/>
    <property type="project" value="InterPro"/>
</dbReference>
<dbReference type="GO" id="GO:0008270">
    <property type="term" value="F:zinc ion binding"/>
    <property type="evidence" value="ECO:0007669"/>
    <property type="project" value="UniProtKB-KW"/>
</dbReference>
<dbReference type="GO" id="GO:0045292">
    <property type="term" value="P:mRNA cis splicing, via spliceosome"/>
    <property type="evidence" value="ECO:0000269"/>
    <property type="project" value="PomBase"/>
</dbReference>
<dbReference type="GO" id="GO:0000398">
    <property type="term" value="P:mRNA splicing, via spliceosome"/>
    <property type="evidence" value="ECO:0000318"/>
    <property type="project" value="GO_Central"/>
</dbReference>
<dbReference type="InterPro" id="IPR003604">
    <property type="entry name" value="Matrin/U1-like-C_Znf_C2H2"/>
</dbReference>
<dbReference type="InterPro" id="IPR040107">
    <property type="entry name" value="Snu23"/>
</dbReference>
<dbReference type="InterPro" id="IPR022755">
    <property type="entry name" value="Znf_C2H2_jaz"/>
</dbReference>
<dbReference type="InterPro" id="IPR036236">
    <property type="entry name" value="Znf_C2H2_sf"/>
</dbReference>
<dbReference type="PANTHER" id="PTHR45986">
    <property type="entry name" value="ZINC FINGER MATRIN-TYPE PROTEIN 2"/>
    <property type="match status" value="1"/>
</dbReference>
<dbReference type="PANTHER" id="PTHR45986:SF1">
    <property type="entry name" value="ZINC FINGER MATRIN-TYPE PROTEIN 2"/>
    <property type="match status" value="1"/>
</dbReference>
<dbReference type="Pfam" id="PF12171">
    <property type="entry name" value="zf-C2H2_jaz"/>
    <property type="match status" value="1"/>
</dbReference>
<dbReference type="SMART" id="SM00451">
    <property type="entry name" value="ZnF_U1"/>
    <property type="match status" value="1"/>
</dbReference>
<dbReference type="SUPFAM" id="SSF57667">
    <property type="entry name" value="beta-beta-alpha zinc fingers"/>
    <property type="match status" value="1"/>
</dbReference>
<dbReference type="PROSITE" id="PS00028">
    <property type="entry name" value="ZINC_FINGER_C2H2_1"/>
    <property type="match status" value="1"/>
</dbReference>
<organism>
    <name type="scientific">Schizosaccharomyces pombe (strain 972 / ATCC 24843)</name>
    <name type="common">Fission yeast</name>
    <dbReference type="NCBI Taxonomy" id="284812"/>
    <lineage>
        <taxon>Eukaryota</taxon>
        <taxon>Fungi</taxon>
        <taxon>Dikarya</taxon>
        <taxon>Ascomycota</taxon>
        <taxon>Taphrinomycotina</taxon>
        <taxon>Schizosaccharomycetes</taxon>
        <taxon>Schizosaccharomycetales</taxon>
        <taxon>Schizosaccharomycetaceae</taxon>
        <taxon>Schizosaccharomyces</taxon>
    </lineage>
</organism>
<accession>Q09776</accession>
<feature type="chain" id="PRO_0000116401" description="U4/U6.U5 small nuclear ribonucleoprotein component snu23">
    <location>
        <begin position="1"/>
        <end position="173"/>
    </location>
</feature>
<feature type="zinc finger region" description="Matrin-type">
    <location>
        <begin position="55"/>
        <end position="85"/>
    </location>
</feature>
<feature type="coiled-coil region" evidence="2">
    <location>
        <begin position="119"/>
        <end position="149"/>
    </location>
</feature>
<gene>
    <name type="primary">snu23</name>
    <name type="ORF">SPAC22F3.11c</name>
</gene>
<name>SNU23_SCHPO</name>
<sequence length="173" mass="20139">MDRYNPPRRNGNSKKNEVVITGGRTQRIDFEKDVNKTTILPAGASVGRRGRGAGWYCEACNETYKDSLSWLDHLNSTQHLRKTRTVIIEKRATLEEVKERMEYWRRQLLEPEKGSEEYSLKERVERYHQELEAKKLRRKQKKVNKEKNSPRLVGENTELAAIMGISSFGSTNL</sequence>
<reference key="1">
    <citation type="journal article" date="2002" name="Nature">
        <title>The genome sequence of Schizosaccharomyces pombe.</title>
        <authorList>
            <person name="Wood V."/>
            <person name="Gwilliam R."/>
            <person name="Rajandream M.A."/>
            <person name="Lyne M.H."/>
            <person name="Lyne R."/>
            <person name="Stewart A."/>
            <person name="Sgouros J.G."/>
            <person name="Peat N."/>
            <person name="Hayles J."/>
            <person name="Baker S.G."/>
            <person name="Basham D."/>
            <person name="Bowman S."/>
            <person name="Brooks K."/>
            <person name="Brown D."/>
            <person name="Brown S."/>
            <person name="Chillingworth T."/>
            <person name="Churcher C.M."/>
            <person name="Collins M."/>
            <person name="Connor R."/>
            <person name="Cronin A."/>
            <person name="Davis P."/>
            <person name="Feltwell T."/>
            <person name="Fraser A."/>
            <person name="Gentles S."/>
            <person name="Goble A."/>
            <person name="Hamlin N."/>
            <person name="Harris D.E."/>
            <person name="Hidalgo J."/>
            <person name="Hodgson G."/>
            <person name="Holroyd S."/>
            <person name="Hornsby T."/>
            <person name="Howarth S."/>
            <person name="Huckle E.J."/>
            <person name="Hunt S."/>
            <person name="Jagels K."/>
            <person name="James K.D."/>
            <person name="Jones L."/>
            <person name="Jones M."/>
            <person name="Leather S."/>
            <person name="McDonald S."/>
            <person name="McLean J."/>
            <person name="Mooney P."/>
            <person name="Moule S."/>
            <person name="Mungall K.L."/>
            <person name="Murphy L.D."/>
            <person name="Niblett D."/>
            <person name="Odell C."/>
            <person name="Oliver K."/>
            <person name="O'Neil S."/>
            <person name="Pearson D."/>
            <person name="Quail M.A."/>
            <person name="Rabbinowitsch E."/>
            <person name="Rutherford K.M."/>
            <person name="Rutter S."/>
            <person name="Saunders D."/>
            <person name="Seeger K."/>
            <person name="Sharp S."/>
            <person name="Skelton J."/>
            <person name="Simmonds M.N."/>
            <person name="Squares R."/>
            <person name="Squares S."/>
            <person name="Stevens K."/>
            <person name="Taylor K."/>
            <person name="Taylor R.G."/>
            <person name="Tivey A."/>
            <person name="Walsh S.V."/>
            <person name="Warren T."/>
            <person name="Whitehead S."/>
            <person name="Woodward J.R."/>
            <person name="Volckaert G."/>
            <person name="Aert R."/>
            <person name="Robben J."/>
            <person name="Grymonprez B."/>
            <person name="Weltjens I."/>
            <person name="Vanstreels E."/>
            <person name="Rieger M."/>
            <person name="Schaefer M."/>
            <person name="Mueller-Auer S."/>
            <person name="Gabel C."/>
            <person name="Fuchs M."/>
            <person name="Duesterhoeft A."/>
            <person name="Fritzc C."/>
            <person name="Holzer E."/>
            <person name="Moestl D."/>
            <person name="Hilbert H."/>
            <person name="Borzym K."/>
            <person name="Langer I."/>
            <person name="Beck A."/>
            <person name="Lehrach H."/>
            <person name="Reinhardt R."/>
            <person name="Pohl T.M."/>
            <person name="Eger P."/>
            <person name="Zimmermann W."/>
            <person name="Wedler H."/>
            <person name="Wambutt R."/>
            <person name="Purnelle B."/>
            <person name="Goffeau A."/>
            <person name="Cadieu E."/>
            <person name="Dreano S."/>
            <person name="Gloux S."/>
            <person name="Lelaure V."/>
            <person name="Mottier S."/>
            <person name="Galibert F."/>
            <person name="Aves S.J."/>
            <person name="Xiang Z."/>
            <person name="Hunt C."/>
            <person name="Moore K."/>
            <person name="Hurst S.M."/>
            <person name="Lucas M."/>
            <person name="Rochet M."/>
            <person name="Gaillardin C."/>
            <person name="Tallada V.A."/>
            <person name="Garzon A."/>
            <person name="Thode G."/>
            <person name="Daga R.R."/>
            <person name="Cruzado L."/>
            <person name="Jimenez J."/>
            <person name="Sanchez M."/>
            <person name="del Rey F."/>
            <person name="Benito J."/>
            <person name="Dominguez A."/>
            <person name="Revuelta J.L."/>
            <person name="Moreno S."/>
            <person name="Armstrong J."/>
            <person name="Forsburg S.L."/>
            <person name="Cerutti L."/>
            <person name="Lowe T."/>
            <person name="McCombie W.R."/>
            <person name="Paulsen I."/>
            <person name="Potashkin J."/>
            <person name="Shpakovski G.V."/>
            <person name="Ussery D."/>
            <person name="Barrell B.G."/>
            <person name="Nurse P."/>
        </authorList>
    </citation>
    <scope>NUCLEOTIDE SEQUENCE [LARGE SCALE GENOMIC DNA]</scope>
    <source>
        <strain>972 / ATCC 24843</strain>
    </source>
</reference>
<reference key="2">
    <citation type="journal article" date="2011" name="Science">
        <title>Comparative functional genomics of the fission yeasts.</title>
        <authorList>
            <person name="Rhind N."/>
            <person name="Chen Z."/>
            <person name="Yassour M."/>
            <person name="Thompson D.A."/>
            <person name="Haas B.J."/>
            <person name="Habib N."/>
            <person name="Wapinski I."/>
            <person name="Roy S."/>
            <person name="Lin M.F."/>
            <person name="Heiman D.I."/>
            <person name="Young S.K."/>
            <person name="Furuya K."/>
            <person name="Guo Y."/>
            <person name="Pidoux A."/>
            <person name="Chen H.M."/>
            <person name="Robbertse B."/>
            <person name="Goldberg J.M."/>
            <person name="Aoki K."/>
            <person name="Bayne E.H."/>
            <person name="Berlin A.M."/>
            <person name="Desjardins C.A."/>
            <person name="Dobbs E."/>
            <person name="Dukaj L."/>
            <person name="Fan L."/>
            <person name="FitzGerald M.G."/>
            <person name="French C."/>
            <person name="Gujja S."/>
            <person name="Hansen K."/>
            <person name="Keifenheim D."/>
            <person name="Levin J.Z."/>
            <person name="Mosher R.A."/>
            <person name="Mueller C.A."/>
            <person name="Pfiffner J."/>
            <person name="Priest M."/>
            <person name="Russ C."/>
            <person name="Smialowska A."/>
            <person name="Swoboda P."/>
            <person name="Sykes S.M."/>
            <person name="Vaughn M."/>
            <person name="Vengrova S."/>
            <person name="Yoder R."/>
            <person name="Zeng Q."/>
            <person name="Allshire R."/>
            <person name="Baulcombe D."/>
            <person name="Birren B.W."/>
            <person name="Brown W."/>
            <person name="Ekwall K."/>
            <person name="Kellis M."/>
            <person name="Leatherwood J."/>
            <person name="Levin H."/>
            <person name="Margalit H."/>
            <person name="Martienssen R."/>
            <person name="Nieduszynski C.A."/>
            <person name="Spatafora J.W."/>
            <person name="Friedman N."/>
            <person name="Dalgaard J.Z."/>
            <person name="Baumann P."/>
            <person name="Niki H."/>
            <person name="Regev A."/>
            <person name="Nusbaum C."/>
        </authorList>
    </citation>
    <scope>REVISION OF GENE MODEL</scope>
</reference>
<reference key="3">
    <citation type="journal article" date="2006" name="Nat. Biotechnol.">
        <title>ORFeome cloning and global analysis of protein localization in the fission yeast Schizosaccharomyces pombe.</title>
        <authorList>
            <person name="Matsuyama A."/>
            <person name="Arai R."/>
            <person name="Yashiroda Y."/>
            <person name="Shirai A."/>
            <person name="Kamata A."/>
            <person name="Sekido S."/>
            <person name="Kobayashi Y."/>
            <person name="Hashimoto A."/>
            <person name="Hamamoto M."/>
            <person name="Hiraoka Y."/>
            <person name="Horinouchi S."/>
            <person name="Yoshida M."/>
        </authorList>
    </citation>
    <scope>IDENTIFICATION OF FRAMESHIFT</scope>
    <scope>SUBCELLULAR LOCATION [LARGE SCALE ANALYSIS]</scope>
    <source>
        <strain>972 / ATCC 24843</strain>
        <strain>JY3</strain>
    </source>
</reference>
<reference key="4">
    <citation type="journal article" date="2015" name="DNA Res.">
        <title>AnABlast: a new in silico strategy for the genome-wide search of novel genes and fossil regions.</title>
        <authorList>
            <person name="Jimenez J."/>
            <person name="Duncan C.D."/>
            <person name="Gallardo M."/>
            <person name="Mata J."/>
            <person name="Perez-Pulido A.J."/>
        </authorList>
    </citation>
    <scope>IDENTIFICATION OF FRAMESHIFT</scope>
    <scope>GENE MODEL REVISION</scope>
</reference>
<comment type="subunit">
    <text evidence="1">Component of the 25S U4/U6.U5 tri-snRNP particle, a subcomplex of the spliceosome.</text>
</comment>
<comment type="subcellular location">
    <subcellularLocation>
        <location evidence="3">Cytoplasm</location>
        <location evidence="3">Cytoskeleton</location>
        <location evidence="3">Microtubule organizing center</location>
        <location evidence="3">Spindle pole body</location>
    </subcellularLocation>
    <subcellularLocation>
        <location evidence="3">Nucleus</location>
    </subcellularLocation>
</comment>
<comment type="sequence caution" evidence="4">
    <conflict type="frameshift">
        <sequence resource="EMBL-CDS" id="CAA91076"/>
    </conflict>
</comment>
<protein>
    <recommendedName>
        <fullName>U4/U6.U5 small nuclear ribonucleoprotein component snu23</fullName>
    </recommendedName>
</protein>